<reference key="1">
    <citation type="journal article" date="2003" name="Proc. Natl. Acad. Sci. U.S.A.">
        <title>Complete genome sequence of the marine planctomycete Pirellula sp. strain 1.</title>
        <authorList>
            <person name="Gloeckner F.O."/>
            <person name="Kube M."/>
            <person name="Bauer M."/>
            <person name="Teeling H."/>
            <person name="Lombardot T."/>
            <person name="Ludwig W."/>
            <person name="Gade D."/>
            <person name="Beck A."/>
            <person name="Borzym K."/>
            <person name="Heitmann K."/>
            <person name="Rabus R."/>
            <person name="Schlesner H."/>
            <person name="Amann R."/>
            <person name="Reinhardt R."/>
        </authorList>
    </citation>
    <scope>NUCLEOTIDE SEQUENCE [LARGE SCALE GENOMIC DNA]</scope>
    <source>
        <strain>DSM 10527 / NCIMB 13988 / SH1</strain>
    </source>
</reference>
<feature type="chain" id="PRO_0000409279" description="Chromosome partition protein Smc">
    <location>
        <begin position="1"/>
        <end position="1192"/>
    </location>
</feature>
<feature type="domain" description="SMC hinge">
    <location>
        <begin position="522"/>
        <end position="636"/>
    </location>
</feature>
<feature type="coiled-coil region" evidence="1">
    <location>
        <begin position="164"/>
        <end position="197"/>
    </location>
</feature>
<feature type="coiled-coil region" evidence="1">
    <location>
        <begin position="234"/>
        <end position="292"/>
    </location>
</feature>
<feature type="coiled-coil region" evidence="1">
    <location>
        <begin position="333"/>
        <end position="369"/>
    </location>
</feature>
<feature type="coiled-coil region" evidence="1">
    <location>
        <begin position="396"/>
        <end position="464"/>
    </location>
</feature>
<feature type="coiled-coil region" evidence="1">
    <location>
        <begin position="676"/>
        <end position="736"/>
    </location>
</feature>
<feature type="coiled-coil region" evidence="1">
    <location>
        <begin position="772"/>
        <end position="902"/>
    </location>
</feature>
<feature type="coiled-coil region" evidence="1">
    <location>
        <begin position="986"/>
        <end position="1030"/>
    </location>
</feature>
<feature type="binding site" evidence="1">
    <location>
        <begin position="31"/>
        <end position="38"/>
    </location>
    <ligand>
        <name>ATP</name>
        <dbReference type="ChEBI" id="CHEBI:30616"/>
    </ligand>
</feature>
<dbReference type="EMBL" id="BX294143">
    <property type="protein sequence ID" value="CAD74592.1"/>
    <property type="status" value="ALT_INIT"/>
    <property type="molecule type" value="Genomic_DNA"/>
</dbReference>
<dbReference type="RefSeq" id="NP_867048.1">
    <property type="nucleotide sequence ID" value="NC_005027.1"/>
</dbReference>
<dbReference type="RefSeq" id="WP_164921931.1">
    <property type="nucleotide sequence ID" value="NC_005027.1"/>
</dbReference>
<dbReference type="SMR" id="Q7UQV4"/>
<dbReference type="STRING" id="243090.RB6065"/>
<dbReference type="EnsemblBacteria" id="CAD74592">
    <property type="protein sequence ID" value="CAD74592"/>
    <property type="gene ID" value="RB6065"/>
</dbReference>
<dbReference type="KEGG" id="rba:RB6065"/>
<dbReference type="PATRIC" id="fig|243090.15.peg.2925"/>
<dbReference type="eggNOG" id="COG1196">
    <property type="taxonomic scope" value="Bacteria"/>
</dbReference>
<dbReference type="HOGENOM" id="CLU_001042_2_2_0"/>
<dbReference type="InParanoid" id="Q7UQV4"/>
<dbReference type="OrthoDB" id="9808768at2"/>
<dbReference type="Proteomes" id="UP000001025">
    <property type="component" value="Chromosome"/>
</dbReference>
<dbReference type="GO" id="GO:0005694">
    <property type="term" value="C:chromosome"/>
    <property type="evidence" value="ECO:0007669"/>
    <property type="project" value="InterPro"/>
</dbReference>
<dbReference type="GO" id="GO:0005737">
    <property type="term" value="C:cytoplasm"/>
    <property type="evidence" value="ECO:0007669"/>
    <property type="project" value="UniProtKB-SubCell"/>
</dbReference>
<dbReference type="GO" id="GO:0016020">
    <property type="term" value="C:membrane"/>
    <property type="evidence" value="ECO:0007669"/>
    <property type="project" value="InterPro"/>
</dbReference>
<dbReference type="GO" id="GO:0005524">
    <property type="term" value="F:ATP binding"/>
    <property type="evidence" value="ECO:0007669"/>
    <property type="project" value="UniProtKB-UniRule"/>
</dbReference>
<dbReference type="GO" id="GO:0016887">
    <property type="term" value="F:ATP hydrolysis activity"/>
    <property type="evidence" value="ECO:0007669"/>
    <property type="project" value="InterPro"/>
</dbReference>
<dbReference type="GO" id="GO:0003677">
    <property type="term" value="F:DNA binding"/>
    <property type="evidence" value="ECO:0007669"/>
    <property type="project" value="UniProtKB-UniRule"/>
</dbReference>
<dbReference type="GO" id="GO:0030261">
    <property type="term" value="P:chromosome condensation"/>
    <property type="evidence" value="ECO:0007669"/>
    <property type="project" value="InterPro"/>
</dbReference>
<dbReference type="GO" id="GO:0007059">
    <property type="term" value="P:chromosome segregation"/>
    <property type="evidence" value="ECO:0007669"/>
    <property type="project" value="UniProtKB-UniRule"/>
</dbReference>
<dbReference type="GO" id="GO:0006260">
    <property type="term" value="P:DNA replication"/>
    <property type="evidence" value="ECO:0007669"/>
    <property type="project" value="UniProtKB-UniRule"/>
</dbReference>
<dbReference type="GO" id="GO:0007165">
    <property type="term" value="P:signal transduction"/>
    <property type="evidence" value="ECO:0007669"/>
    <property type="project" value="InterPro"/>
</dbReference>
<dbReference type="GO" id="GO:0007062">
    <property type="term" value="P:sister chromatid cohesion"/>
    <property type="evidence" value="ECO:0007669"/>
    <property type="project" value="InterPro"/>
</dbReference>
<dbReference type="Gene3D" id="1.20.1060.20">
    <property type="match status" value="1"/>
</dbReference>
<dbReference type="Gene3D" id="3.30.70.1620">
    <property type="match status" value="1"/>
</dbReference>
<dbReference type="Gene3D" id="6.10.140.1720">
    <property type="match status" value="1"/>
</dbReference>
<dbReference type="Gene3D" id="3.40.50.300">
    <property type="entry name" value="P-loop containing nucleotide triphosphate hydrolases"/>
    <property type="match status" value="2"/>
</dbReference>
<dbReference type="HAMAP" id="MF_01894">
    <property type="entry name" value="Smc_prok"/>
    <property type="match status" value="1"/>
</dbReference>
<dbReference type="InterPro" id="IPR004089">
    <property type="entry name" value="MCPsignal_dom"/>
</dbReference>
<dbReference type="InterPro" id="IPR027417">
    <property type="entry name" value="P-loop_NTPase"/>
</dbReference>
<dbReference type="InterPro" id="IPR003395">
    <property type="entry name" value="RecF/RecN/SMC_N"/>
</dbReference>
<dbReference type="InterPro" id="IPR024704">
    <property type="entry name" value="SMC"/>
</dbReference>
<dbReference type="InterPro" id="IPR010935">
    <property type="entry name" value="SMC_hinge"/>
</dbReference>
<dbReference type="InterPro" id="IPR036277">
    <property type="entry name" value="SMC_hinge_sf"/>
</dbReference>
<dbReference type="InterPro" id="IPR011890">
    <property type="entry name" value="SMC_prok"/>
</dbReference>
<dbReference type="NCBIfam" id="TIGR02168">
    <property type="entry name" value="SMC_prok_B"/>
    <property type="match status" value="1"/>
</dbReference>
<dbReference type="PANTHER" id="PTHR43977">
    <property type="entry name" value="STRUCTURAL MAINTENANCE OF CHROMOSOMES PROTEIN 3"/>
    <property type="match status" value="1"/>
</dbReference>
<dbReference type="Pfam" id="PF06470">
    <property type="entry name" value="SMC_hinge"/>
    <property type="match status" value="1"/>
</dbReference>
<dbReference type="Pfam" id="PF02463">
    <property type="entry name" value="SMC_N"/>
    <property type="match status" value="1"/>
</dbReference>
<dbReference type="PIRSF" id="PIRSF005719">
    <property type="entry name" value="SMC"/>
    <property type="match status" value="1"/>
</dbReference>
<dbReference type="SMART" id="SM00968">
    <property type="entry name" value="SMC_hinge"/>
    <property type="match status" value="1"/>
</dbReference>
<dbReference type="SUPFAM" id="SSF52540">
    <property type="entry name" value="P-loop containing nucleoside triphosphate hydrolases"/>
    <property type="match status" value="1"/>
</dbReference>
<dbReference type="SUPFAM" id="SSF75553">
    <property type="entry name" value="Smc hinge domain"/>
    <property type="match status" value="1"/>
</dbReference>
<dbReference type="SUPFAM" id="SSF57997">
    <property type="entry name" value="Tropomyosin"/>
    <property type="match status" value="1"/>
</dbReference>
<keyword id="KW-0067">ATP-binding</keyword>
<keyword id="KW-0175">Coiled coil</keyword>
<keyword id="KW-0963">Cytoplasm</keyword>
<keyword id="KW-0238">DNA-binding</keyword>
<keyword id="KW-0547">Nucleotide-binding</keyword>
<keyword id="KW-1185">Reference proteome</keyword>
<sequence length="1192" mass="131640">MLKALELAGFKSFADRTRFDFPDGITVVVGPNGSGKSNIVDAMKWVLGSQSAKSLRGKDMSDVIFKGSQTRGPAGAAEATIIFDNTGGQMPVDAPEVHVTRRVYRSGEGEYLINQQAVRLKDVKALIRGTGIGIDAYSLIEQGKVDRMLQANAKDRRAIFEEAAGISRFKAKKVEAERRLERVQTNLTRLGDIVDEVATRLKTLKSQAGKAERYRQASDRLKELRTVVAWNDWLTLSTELNEATTQLEAAQRQHRKADTLRESLEEQRQAAEMQLQTIADAAREAEQSRSELSGEIARIGGRRESDQTTLVEQRRTLIGHYRRLRAMRTEAGSAIADLRKTIAALEVAEAELADVQQKKESIAAKRDVEQATVHRIESARDDLQRDHLAAVRRVAEHEANRGRVAQQMREAARALEEIARNSVTAEEGLKTALRDHDEVARNVSELEKRITDAQREVEIADAKVCETRRVLERRREEIGSLKIRLQGITERARVLDELQQKQEGVSGGVREVLRMSNAELKKDLVGIVADCFSVDRQVAPLIDAALGPRSQYVIVRGGSVSDAISRGDIKIGTRVGIIRLDELPNRRPGDKIRLDGLAGVIGRADKMIDCEVELEPLVRHLLGNTWLVDTLATAIGLRKLSSAGLRFVTASGDLLDNDGSSVVGPPGGETGLVSRRSELAAAKSEMQHYSYQIAEAEKEVGRLTGVVDSEAAELGRHEQAMRKWITEHAAAEAKLHHVTERLSARQATVDELKRSSASHTELLATAKQQDGELAVSIQKGKQEIETLEAQRTEVDVQLTAASEQLREVQSEAMSISVEAARSEQRVESLTIAADVARRDQSQREAANQEVRDAMTRTRERITEIETRILEADNRLAELMIAMESADAKLQVLAAEANQEREATRRVQTESQAAIKAVAKATEAVATISSARDAAALKQSTLADRIAEDYQIDLRNDEPPEELAEIEDRSSVDEEISRLRGQVQNVGSVNMEALEELNELQVRYDELHGQYQDLTAAKDSLQRVIARINADSRRLFLDTLEAIRINFQKLYRKSFGGGHADLILEESDDPLEAGVEIVATPPGKPSFSNSLLSGGEKALTAVALLMSIFQYRPSPFCVLDEVDAPFDEANIGRFVTVLTEFLDQSKFIVVTHSKKTMTAATTLYGVTMQESGVSKQVSIRFEDVSEDGQINAA</sequence>
<comment type="function">
    <text evidence="1">Required for chromosome condensation and partitioning.</text>
</comment>
<comment type="subunit">
    <text evidence="1">Homodimer.</text>
</comment>
<comment type="subcellular location">
    <subcellularLocation>
        <location evidence="1">Cytoplasm</location>
    </subcellularLocation>
</comment>
<comment type="domain">
    <text evidence="1">Contains large globular domains required for ATP hydrolysis at each terminus and a third globular domain forming a flexible SMC hinge near the middle of the molecule. These domains are separated by coiled-coil structures.</text>
</comment>
<comment type="similarity">
    <text evidence="1">Belongs to the SMC family.</text>
</comment>
<comment type="sequence caution" evidence="2">
    <conflict type="erroneous initiation">
        <sequence resource="EMBL-CDS" id="CAD74592"/>
    </conflict>
    <text>Extended N-terminus.</text>
</comment>
<protein>
    <recommendedName>
        <fullName evidence="1">Chromosome partition protein Smc</fullName>
    </recommendedName>
</protein>
<gene>
    <name evidence="1" type="primary">smc</name>
    <name type="ordered locus">RB6065</name>
</gene>
<accession>Q7UQV4</accession>
<name>SMC_RHOBA</name>
<proteinExistence type="inferred from homology"/>
<evidence type="ECO:0000255" key="1">
    <source>
        <dbReference type="HAMAP-Rule" id="MF_01894"/>
    </source>
</evidence>
<evidence type="ECO:0000305" key="2"/>
<organism>
    <name type="scientific">Rhodopirellula baltica (strain DSM 10527 / NCIMB 13988 / SH1)</name>
    <dbReference type="NCBI Taxonomy" id="243090"/>
    <lineage>
        <taxon>Bacteria</taxon>
        <taxon>Pseudomonadati</taxon>
        <taxon>Planctomycetota</taxon>
        <taxon>Planctomycetia</taxon>
        <taxon>Pirellulales</taxon>
        <taxon>Pirellulaceae</taxon>
        <taxon>Rhodopirellula</taxon>
    </lineage>
</organism>